<proteinExistence type="inferred from homology"/>
<gene>
    <name evidence="1" type="primary">miaA</name>
    <name type="ordered locus">PMI3364</name>
</gene>
<organism>
    <name type="scientific">Proteus mirabilis (strain HI4320)</name>
    <dbReference type="NCBI Taxonomy" id="529507"/>
    <lineage>
        <taxon>Bacteria</taxon>
        <taxon>Pseudomonadati</taxon>
        <taxon>Pseudomonadota</taxon>
        <taxon>Gammaproteobacteria</taxon>
        <taxon>Enterobacterales</taxon>
        <taxon>Morganellaceae</taxon>
        <taxon>Proteus</taxon>
    </lineage>
</organism>
<feature type="chain" id="PRO_1000098678" description="tRNA dimethylallyltransferase">
    <location>
        <begin position="1"/>
        <end position="313"/>
    </location>
</feature>
<feature type="region of interest" description="Interaction with substrate tRNA" evidence="1">
    <location>
        <begin position="42"/>
        <end position="45"/>
    </location>
</feature>
<feature type="region of interest" description="Interaction with substrate tRNA" evidence="1">
    <location>
        <begin position="166"/>
        <end position="170"/>
    </location>
</feature>
<feature type="region of interest" description="Interaction with substrate tRNA" evidence="1">
    <location>
        <begin position="247"/>
        <end position="252"/>
    </location>
</feature>
<feature type="region of interest" description="Interaction with substrate tRNA" evidence="1">
    <location>
        <begin position="280"/>
        <end position="287"/>
    </location>
</feature>
<feature type="binding site" evidence="1">
    <location>
        <begin position="17"/>
        <end position="24"/>
    </location>
    <ligand>
        <name>ATP</name>
        <dbReference type="ChEBI" id="CHEBI:30616"/>
    </ligand>
</feature>
<feature type="binding site" evidence="1">
    <location>
        <begin position="19"/>
        <end position="24"/>
    </location>
    <ligand>
        <name>substrate</name>
    </ligand>
</feature>
<feature type="site" description="Interaction with substrate tRNA" evidence="1">
    <location>
        <position position="108"/>
    </location>
</feature>
<feature type="site" description="Interaction with substrate tRNA" evidence="1">
    <location>
        <position position="130"/>
    </location>
</feature>
<accession>B4F265</accession>
<protein>
    <recommendedName>
        <fullName evidence="1">tRNA dimethylallyltransferase</fullName>
        <ecNumber evidence="1">2.5.1.75</ecNumber>
    </recommendedName>
    <alternativeName>
        <fullName evidence="1">Dimethylallyl diphosphate:tRNA dimethylallyltransferase</fullName>
        <shortName evidence="1">DMAPP:tRNA dimethylallyltransferase</shortName>
        <shortName evidence="1">DMATase</shortName>
    </alternativeName>
    <alternativeName>
        <fullName evidence="1">Isopentenyl-diphosphate:tRNA isopentenyltransferase</fullName>
        <shortName evidence="1">IPP transferase</shortName>
        <shortName evidence="1">IPPT</shortName>
        <shortName evidence="1">IPTase</shortName>
    </alternativeName>
</protein>
<keyword id="KW-0067">ATP-binding</keyword>
<keyword id="KW-0460">Magnesium</keyword>
<keyword id="KW-0547">Nucleotide-binding</keyword>
<keyword id="KW-1185">Reference proteome</keyword>
<keyword id="KW-0808">Transferase</keyword>
<keyword id="KW-0819">tRNA processing</keyword>
<sequence length="313" mass="35136">MSEVKTQIKPKAIFLMGPTASGKTALAIALRQKLPVDLISVDSALIYRGMDIGTAKPDETEQSLAPHRLIDILDPALPYSAADFRKDALKAMEEITAAGRIPLLVGGTMLYFKALLEGLSPLPSANPEIRAEIEKKAAEQGWEAIHQELASVDPVAAKRIHPNDPQRLSRALEVYLISGKSMTELTQISGEALPYDVYQFAIAPKDRNVLHQRIEARFKQMLTCGFEDEVKSLYQRGDLHEDLPSIRCVGYRQMWSYLSGEIDYDEMVYRGICATRQLAKRQITWLRGWHDVHWLDSEDFEQSLNTVLQVVSA</sequence>
<comment type="function">
    <text evidence="1">Catalyzes the transfer of a dimethylallyl group onto the adenine at position 37 in tRNAs that read codons beginning with uridine, leading to the formation of N6-(dimethylallyl)adenosine (i(6)A).</text>
</comment>
<comment type="catalytic activity">
    <reaction evidence="1">
        <text>adenosine(37) in tRNA + dimethylallyl diphosphate = N(6)-dimethylallyladenosine(37) in tRNA + diphosphate</text>
        <dbReference type="Rhea" id="RHEA:26482"/>
        <dbReference type="Rhea" id="RHEA-COMP:10162"/>
        <dbReference type="Rhea" id="RHEA-COMP:10375"/>
        <dbReference type="ChEBI" id="CHEBI:33019"/>
        <dbReference type="ChEBI" id="CHEBI:57623"/>
        <dbReference type="ChEBI" id="CHEBI:74411"/>
        <dbReference type="ChEBI" id="CHEBI:74415"/>
        <dbReference type="EC" id="2.5.1.75"/>
    </reaction>
</comment>
<comment type="cofactor">
    <cofactor evidence="1">
        <name>Mg(2+)</name>
        <dbReference type="ChEBI" id="CHEBI:18420"/>
    </cofactor>
</comment>
<comment type="subunit">
    <text evidence="1">Monomer.</text>
</comment>
<comment type="similarity">
    <text evidence="1">Belongs to the IPP transferase family.</text>
</comment>
<evidence type="ECO:0000255" key="1">
    <source>
        <dbReference type="HAMAP-Rule" id="MF_00185"/>
    </source>
</evidence>
<dbReference type="EC" id="2.5.1.75" evidence="1"/>
<dbReference type="EMBL" id="AM942759">
    <property type="protein sequence ID" value="CAR46600.1"/>
    <property type="molecule type" value="Genomic_DNA"/>
</dbReference>
<dbReference type="RefSeq" id="WP_004246293.1">
    <property type="nucleotide sequence ID" value="NC_010554.1"/>
</dbReference>
<dbReference type="SMR" id="B4F265"/>
<dbReference type="EnsemblBacteria" id="CAR46600">
    <property type="protein sequence ID" value="CAR46600"/>
    <property type="gene ID" value="PMI3364"/>
</dbReference>
<dbReference type="GeneID" id="6802103"/>
<dbReference type="KEGG" id="pmr:PMI3364"/>
<dbReference type="eggNOG" id="COG0324">
    <property type="taxonomic scope" value="Bacteria"/>
</dbReference>
<dbReference type="HOGENOM" id="CLU_032616_0_0_6"/>
<dbReference type="Proteomes" id="UP000008319">
    <property type="component" value="Chromosome"/>
</dbReference>
<dbReference type="GO" id="GO:0005524">
    <property type="term" value="F:ATP binding"/>
    <property type="evidence" value="ECO:0007669"/>
    <property type="project" value="UniProtKB-UniRule"/>
</dbReference>
<dbReference type="GO" id="GO:0052381">
    <property type="term" value="F:tRNA dimethylallyltransferase activity"/>
    <property type="evidence" value="ECO:0007669"/>
    <property type="project" value="UniProtKB-UniRule"/>
</dbReference>
<dbReference type="GO" id="GO:0006400">
    <property type="term" value="P:tRNA modification"/>
    <property type="evidence" value="ECO:0007669"/>
    <property type="project" value="TreeGrafter"/>
</dbReference>
<dbReference type="FunFam" id="1.10.20.140:FF:000001">
    <property type="entry name" value="tRNA dimethylallyltransferase"/>
    <property type="match status" value="1"/>
</dbReference>
<dbReference type="Gene3D" id="1.10.20.140">
    <property type="match status" value="1"/>
</dbReference>
<dbReference type="Gene3D" id="3.40.50.300">
    <property type="entry name" value="P-loop containing nucleotide triphosphate hydrolases"/>
    <property type="match status" value="1"/>
</dbReference>
<dbReference type="HAMAP" id="MF_00185">
    <property type="entry name" value="IPP_trans"/>
    <property type="match status" value="1"/>
</dbReference>
<dbReference type="InterPro" id="IPR039657">
    <property type="entry name" value="Dimethylallyltransferase"/>
</dbReference>
<dbReference type="InterPro" id="IPR018022">
    <property type="entry name" value="IPT"/>
</dbReference>
<dbReference type="InterPro" id="IPR027417">
    <property type="entry name" value="P-loop_NTPase"/>
</dbReference>
<dbReference type="NCBIfam" id="TIGR00174">
    <property type="entry name" value="miaA"/>
    <property type="match status" value="1"/>
</dbReference>
<dbReference type="PANTHER" id="PTHR11088">
    <property type="entry name" value="TRNA DIMETHYLALLYLTRANSFERASE"/>
    <property type="match status" value="1"/>
</dbReference>
<dbReference type="PANTHER" id="PTHR11088:SF60">
    <property type="entry name" value="TRNA DIMETHYLALLYLTRANSFERASE"/>
    <property type="match status" value="1"/>
</dbReference>
<dbReference type="Pfam" id="PF01715">
    <property type="entry name" value="IPPT"/>
    <property type="match status" value="1"/>
</dbReference>
<dbReference type="SUPFAM" id="SSF52540">
    <property type="entry name" value="P-loop containing nucleoside triphosphate hydrolases"/>
    <property type="match status" value="1"/>
</dbReference>
<reference key="1">
    <citation type="journal article" date="2008" name="J. Bacteriol.">
        <title>Complete genome sequence of uropathogenic Proteus mirabilis, a master of both adherence and motility.</title>
        <authorList>
            <person name="Pearson M.M."/>
            <person name="Sebaihia M."/>
            <person name="Churcher C."/>
            <person name="Quail M.A."/>
            <person name="Seshasayee A.S."/>
            <person name="Luscombe N.M."/>
            <person name="Abdellah Z."/>
            <person name="Arrosmith C."/>
            <person name="Atkin B."/>
            <person name="Chillingworth T."/>
            <person name="Hauser H."/>
            <person name="Jagels K."/>
            <person name="Moule S."/>
            <person name="Mungall K."/>
            <person name="Norbertczak H."/>
            <person name="Rabbinowitsch E."/>
            <person name="Walker D."/>
            <person name="Whithead S."/>
            <person name="Thomson N.R."/>
            <person name="Rather P.N."/>
            <person name="Parkhill J."/>
            <person name="Mobley H.L.T."/>
        </authorList>
    </citation>
    <scope>NUCLEOTIDE SEQUENCE [LARGE SCALE GENOMIC DNA]</scope>
    <source>
        <strain>HI4320</strain>
    </source>
</reference>
<name>MIAA_PROMH</name>